<comment type="function">
    <text evidence="4">PPIase that catalyzes the cis-trans isomerization of proline imidic peptide bonds in oligopeptides and may therefore assist protein folding (PubMed:20676357). May be implicated in the folding, transport, and assembly of proteins. May play an important role in the regulation of pre-mRNA splicing.</text>
</comment>
<comment type="catalytic activity">
    <reaction evidence="4">
        <text>[protein]-peptidylproline (omega=180) = [protein]-peptidylproline (omega=0)</text>
        <dbReference type="Rhea" id="RHEA:16237"/>
        <dbReference type="Rhea" id="RHEA-COMP:10747"/>
        <dbReference type="Rhea" id="RHEA-COMP:10748"/>
        <dbReference type="ChEBI" id="CHEBI:83833"/>
        <dbReference type="ChEBI" id="CHEBI:83834"/>
        <dbReference type="EC" id="5.2.1.8"/>
    </reaction>
</comment>
<comment type="activity regulation">
    <text evidence="8">Inhibited by cyclosporin A (CsA).</text>
</comment>
<comment type="subunit">
    <text evidence="3 6">Interacts with CLK1, PNN and with the phosphorylated C-terminal domain of RNA polymerase II.</text>
</comment>
<comment type="interaction">
    <interactant intactId="EBI-396072">
        <id>Q13427</id>
    </interactant>
    <interactant intactId="EBI-10181188">
        <id>Q8N7W2-2</id>
        <label>BEND7</label>
    </interactant>
    <organismsDiffer>false</organismsDiffer>
    <experiments>3</experiments>
</comment>
<comment type="interaction">
    <interactant intactId="EBI-396072">
        <id>Q13427</id>
    </interactant>
    <interactant intactId="EBI-739624">
        <id>Q8NHQ1</id>
        <label>CEP70</label>
    </interactant>
    <organismsDiffer>false</organismsDiffer>
    <experiments>3</experiments>
</comment>
<comment type="interaction">
    <interactant intactId="EBI-396072">
        <id>Q13427</id>
    </interactant>
    <interactant intactId="EBI-7875264">
        <id>O75553</id>
        <label>DAB1</label>
    </interactant>
    <organismsDiffer>false</organismsDiffer>
    <experiments>3</experiments>
</comment>
<comment type="interaction">
    <interactant intactId="EBI-396072">
        <id>Q13427</id>
    </interactant>
    <interactant intactId="EBI-10186082">
        <id>Q9UI36-2</id>
        <label>DACH1</label>
    </interactant>
    <organismsDiffer>false</organismsDiffer>
    <experiments>3</experiments>
</comment>
<comment type="interaction">
    <interactant intactId="EBI-396072">
        <id>Q13427</id>
    </interactant>
    <interactant intactId="EBI-10229248">
        <id>Q96C98</id>
        <label>FHL3</label>
    </interactant>
    <organismsDiffer>false</organismsDiffer>
    <experiments>3</experiments>
</comment>
<comment type="interaction">
    <interactant intactId="EBI-396072">
        <id>Q13427</id>
    </interactant>
    <interactant intactId="EBI-2511344">
        <id>Q8NC69</id>
        <label>KCTD6</label>
    </interactant>
    <organismsDiffer>false</organismsDiffer>
    <experiments>3</experiments>
</comment>
<comment type="interaction">
    <interactant intactId="EBI-396072">
        <id>Q13427</id>
    </interactant>
    <interactant intactId="EBI-1170392">
        <id>P17931</id>
        <label>LGALS3</label>
    </interactant>
    <organismsDiffer>false</organismsDiffer>
    <experiments>3</experiments>
</comment>
<comment type="interaction">
    <interactant intactId="EBI-396072">
        <id>Q13427</id>
    </interactant>
    <interactant intactId="EBI-10187804">
        <id>Q6NVH9</id>
        <label>LGALS3</label>
    </interactant>
    <organismsDiffer>false</organismsDiffer>
    <experiments>3</experiments>
</comment>
<comment type="interaction">
    <interactant intactId="EBI-396072">
        <id>Q13427</id>
    </interactant>
    <interactant intactId="EBI-946095">
        <id>Q15365</id>
        <label>PCBP1</label>
    </interactant>
    <organismsDiffer>false</organismsDiffer>
    <experiments>2</experiments>
</comment>
<comment type="interaction">
    <interactant intactId="EBI-396072">
        <id>Q13427</id>
    </interactant>
    <interactant intactId="EBI-302355">
        <id>Q9UL42</id>
        <label>PNMA2</label>
    </interactant>
    <organismsDiffer>false</organismsDiffer>
    <experiments>3</experiments>
</comment>
<comment type="interaction">
    <interactant intactId="EBI-396072">
        <id>Q13427</id>
    </interactant>
    <interactant intactId="EBI-724333">
        <id>Q96CD2</id>
        <label>PPCDC</label>
    </interactant>
    <organismsDiffer>false</organismsDiffer>
    <experiments>3</experiments>
</comment>
<comment type="interaction">
    <interactant intactId="EBI-396072">
        <id>Q13427</id>
    </interactant>
    <interactant intactId="EBI-395290">
        <id>Q14498</id>
        <label>RBM39</label>
    </interactant>
    <organismsDiffer>false</organismsDiffer>
    <experiments>4</experiments>
</comment>
<comment type="interaction">
    <interactant intactId="EBI-396072">
        <id>Q13427</id>
    </interactant>
    <interactant intactId="EBI-395421">
        <id>Q16637</id>
        <label>SMN2</label>
    </interactant>
    <organismsDiffer>false</organismsDiffer>
    <experiments>4</experiments>
</comment>
<comment type="interaction">
    <interactant intactId="EBI-396072">
        <id>Q13427</id>
    </interactant>
    <interactant intactId="EBI-717422">
        <id>Q12800</id>
        <label>TFCP2</label>
    </interactant>
    <organismsDiffer>false</organismsDiffer>
    <experiments>3</experiments>
</comment>
<comment type="interaction">
    <interactant intactId="EBI-396072">
        <id>Q13427</id>
    </interactant>
    <interactant intactId="EBI-741515">
        <id>Q9NVV9</id>
        <label>THAP1</label>
    </interactant>
    <organismsDiffer>false</organismsDiffer>
    <experiments>3</experiments>
</comment>
<comment type="interaction">
    <interactant intactId="EBI-396072">
        <id>Q13427</id>
    </interactant>
    <interactant intactId="EBI-25475797">
        <id>PRO_0000037309</id>
        <label>rep</label>
        <dbReference type="UniProtKB" id="P0C6X7"/>
    </interactant>
    <organismsDiffer>true</organismsDiffer>
    <experiments>4</experiments>
</comment>
<comment type="subcellular location">
    <subcellularLocation>
        <location evidence="3">Nucleus matrix</location>
    </subcellularLocation>
    <subcellularLocation>
        <location evidence="3">Nucleus speckle</location>
    </subcellularLocation>
    <text evidence="3">Colocalizes with RNA splicing factors at nuclear speckles.</text>
</comment>
<comment type="alternative products">
    <event type="alternative splicing"/>
    <isoform>
        <id>Q13427-1</id>
        <name>1</name>
        <sequence type="displayed"/>
    </isoform>
    <isoform>
        <id>Q13427-2</id>
        <name>2</name>
        <sequence type="described" ref="VSP_009662 VSP_009663"/>
    </isoform>
</comment>
<comment type="tissue specificity">
    <text evidence="5">Ubiquitous.</text>
</comment>
<comment type="domain">
    <text evidence="6">The RS domain is required for the interaction with the phosphorylated C-terminal domain of RNA polymerase II.</text>
</comment>
<keyword id="KW-0002">3D-structure</keyword>
<keyword id="KW-0025">Alternative splicing</keyword>
<keyword id="KW-0413">Isomerase</keyword>
<keyword id="KW-1017">Isopeptide bond</keyword>
<keyword id="KW-0539">Nucleus</keyword>
<keyword id="KW-0597">Phosphoprotein</keyword>
<keyword id="KW-1267">Proteomics identification</keyword>
<keyword id="KW-1185">Reference proteome</keyword>
<keyword id="KW-0697">Rotamase</keyword>
<keyword id="KW-0832">Ubl conjugation</keyword>
<reference key="1">
    <citation type="journal article" date="1996" name="Gene">
        <title>RS cyclophilins: identification of an NK-TR1-related cyclophilin.</title>
        <authorList>
            <person name="Nestel F.P."/>
            <person name="Colwill K."/>
            <person name="Harper S."/>
            <person name="Pawson T."/>
            <person name="Anderson S.K."/>
        </authorList>
    </citation>
    <scope>NUCLEOTIDE SEQUENCE [MRNA] (ISOFORM 1)</scope>
    <scope>TISSUE SPECIFICITY</scope>
    <scope>VARIANT ASP-699</scope>
    <source>
        <tissue>T-cell</tissue>
    </source>
</reference>
<reference key="2">
    <citation type="journal article" date="1997" name="Nucleic Acids Res.">
        <title>A serine/arginine-rich nuclear matrix cyclophilin interacts with the C-terminal domain of RNA polymerase II.</title>
        <authorList>
            <person name="Bourquin J.-P."/>
            <person name="Stagljar I."/>
            <person name="Meier P."/>
            <person name="Moosmann P."/>
            <person name="Silke J."/>
            <person name="Baechi T."/>
            <person name="Georgiev O."/>
            <person name="Schaffner W."/>
        </authorList>
    </citation>
    <scope>NUCLEOTIDE SEQUENCE [MRNA] (ISOFORM 1)</scope>
    <scope>INTERACTION WITH CLK1 AND RNA POLYMERASE II</scope>
    <scope>DOMAIN</scope>
    <scope>VARIANT ASP-699</scope>
    <source>
        <tissue>B-cell</tissue>
    </source>
</reference>
<reference key="3">
    <citation type="journal article" date="2005" name="Nature">
        <title>Generation and annotation of the DNA sequences of human chromosomes 2 and 4.</title>
        <authorList>
            <person name="Hillier L.W."/>
            <person name="Graves T.A."/>
            <person name="Fulton R.S."/>
            <person name="Fulton L.A."/>
            <person name="Pepin K.H."/>
            <person name="Minx P."/>
            <person name="Wagner-McPherson C."/>
            <person name="Layman D."/>
            <person name="Wylie K."/>
            <person name="Sekhon M."/>
            <person name="Becker M.C."/>
            <person name="Fewell G.A."/>
            <person name="Delehaunty K.D."/>
            <person name="Miner T.L."/>
            <person name="Nash W.E."/>
            <person name="Kremitzki C."/>
            <person name="Oddy L."/>
            <person name="Du H."/>
            <person name="Sun H."/>
            <person name="Bradshaw-Cordum H."/>
            <person name="Ali J."/>
            <person name="Carter J."/>
            <person name="Cordes M."/>
            <person name="Harris A."/>
            <person name="Isak A."/>
            <person name="van Brunt A."/>
            <person name="Nguyen C."/>
            <person name="Du F."/>
            <person name="Courtney L."/>
            <person name="Kalicki J."/>
            <person name="Ozersky P."/>
            <person name="Abbott S."/>
            <person name="Armstrong J."/>
            <person name="Belter E.A."/>
            <person name="Caruso L."/>
            <person name="Cedroni M."/>
            <person name="Cotton M."/>
            <person name="Davidson T."/>
            <person name="Desai A."/>
            <person name="Elliott G."/>
            <person name="Erb T."/>
            <person name="Fronick C."/>
            <person name="Gaige T."/>
            <person name="Haakenson W."/>
            <person name="Haglund K."/>
            <person name="Holmes A."/>
            <person name="Harkins R."/>
            <person name="Kim K."/>
            <person name="Kruchowski S.S."/>
            <person name="Strong C.M."/>
            <person name="Grewal N."/>
            <person name="Goyea E."/>
            <person name="Hou S."/>
            <person name="Levy A."/>
            <person name="Martinka S."/>
            <person name="Mead K."/>
            <person name="McLellan M.D."/>
            <person name="Meyer R."/>
            <person name="Randall-Maher J."/>
            <person name="Tomlinson C."/>
            <person name="Dauphin-Kohlberg S."/>
            <person name="Kozlowicz-Reilly A."/>
            <person name="Shah N."/>
            <person name="Swearengen-Shahid S."/>
            <person name="Snider J."/>
            <person name="Strong J.T."/>
            <person name="Thompson J."/>
            <person name="Yoakum M."/>
            <person name="Leonard S."/>
            <person name="Pearman C."/>
            <person name="Trani L."/>
            <person name="Radionenko M."/>
            <person name="Waligorski J.E."/>
            <person name="Wang C."/>
            <person name="Rock S.M."/>
            <person name="Tin-Wollam A.-M."/>
            <person name="Maupin R."/>
            <person name="Latreille P."/>
            <person name="Wendl M.C."/>
            <person name="Yang S.-P."/>
            <person name="Pohl C."/>
            <person name="Wallis J.W."/>
            <person name="Spieth J."/>
            <person name="Bieri T.A."/>
            <person name="Berkowicz N."/>
            <person name="Nelson J.O."/>
            <person name="Osborne J."/>
            <person name="Ding L."/>
            <person name="Meyer R."/>
            <person name="Sabo A."/>
            <person name="Shotland Y."/>
            <person name="Sinha P."/>
            <person name="Wohldmann P.E."/>
            <person name="Cook L.L."/>
            <person name="Hickenbotham M.T."/>
            <person name="Eldred J."/>
            <person name="Williams D."/>
            <person name="Jones T.A."/>
            <person name="She X."/>
            <person name="Ciccarelli F.D."/>
            <person name="Izaurralde E."/>
            <person name="Taylor J."/>
            <person name="Schmutz J."/>
            <person name="Myers R.M."/>
            <person name="Cox D.R."/>
            <person name="Huang X."/>
            <person name="McPherson J.D."/>
            <person name="Mardis E.R."/>
            <person name="Clifton S.W."/>
            <person name="Warren W.C."/>
            <person name="Chinwalla A.T."/>
            <person name="Eddy S.R."/>
            <person name="Marra M.A."/>
            <person name="Ovcharenko I."/>
            <person name="Furey T.S."/>
            <person name="Miller W."/>
            <person name="Eichler E.E."/>
            <person name="Bork P."/>
            <person name="Suyama M."/>
            <person name="Torrents D."/>
            <person name="Waterston R.H."/>
            <person name="Wilson R.K."/>
        </authorList>
    </citation>
    <scope>NUCLEOTIDE SEQUENCE [LARGE SCALE GENOMIC DNA]</scope>
</reference>
<reference key="4">
    <citation type="submission" date="2005-09" db="EMBL/GenBank/DDBJ databases">
        <authorList>
            <person name="Mural R.J."/>
            <person name="Istrail S."/>
            <person name="Sutton G.G."/>
            <person name="Florea L."/>
            <person name="Halpern A.L."/>
            <person name="Mobarry C.M."/>
            <person name="Lippert R."/>
            <person name="Walenz B."/>
            <person name="Shatkay H."/>
            <person name="Dew I."/>
            <person name="Miller J.R."/>
            <person name="Flanigan M.J."/>
            <person name="Edwards N.J."/>
            <person name="Bolanos R."/>
            <person name="Fasulo D."/>
            <person name="Halldorsson B.V."/>
            <person name="Hannenhalli S."/>
            <person name="Turner R."/>
            <person name="Yooseph S."/>
            <person name="Lu F."/>
            <person name="Nusskern D.R."/>
            <person name="Shue B.C."/>
            <person name="Zheng X.H."/>
            <person name="Zhong F."/>
            <person name="Delcher A.L."/>
            <person name="Huson D.H."/>
            <person name="Kravitz S.A."/>
            <person name="Mouchard L."/>
            <person name="Reinert K."/>
            <person name="Remington K.A."/>
            <person name="Clark A.G."/>
            <person name="Waterman M.S."/>
            <person name="Eichler E.E."/>
            <person name="Adams M.D."/>
            <person name="Hunkapiller M.W."/>
            <person name="Myers E.W."/>
            <person name="Venter J.C."/>
        </authorList>
    </citation>
    <scope>NUCLEOTIDE SEQUENCE [LARGE SCALE GENOMIC DNA]</scope>
</reference>
<reference key="5">
    <citation type="journal article" date="2004" name="Genome Res.">
        <title>The status, quality, and expansion of the NIH full-length cDNA project: the Mammalian Gene Collection (MGC).</title>
        <authorList>
            <consortium name="The MGC Project Team"/>
        </authorList>
    </citation>
    <scope>NUCLEOTIDE SEQUENCE [LARGE SCALE MRNA] (ISOFORM 2)</scope>
</reference>
<reference key="6">
    <citation type="journal article" date="2004" name="Biochem. Biophys. Res. Commun.">
        <title>Over-expression of SR-cyclophilin, an interaction partner of nuclear pinin, releases SR family splicing factors from nuclear speckles.</title>
        <authorList>
            <person name="Lin C.L."/>
            <person name="Leu S."/>
            <person name="Lu M.C."/>
            <person name="Ouyang P."/>
        </authorList>
    </citation>
    <scope>INTERACTION WITH PNN</scope>
    <scope>SUBCELLULAR LOCATION</scope>
</reference>
<reference key="7">
    <citation type="journal article" date="2006" name="Cell">
        <title>Global, in vivo, and site-specific phosphorylation dynamics in signaling networks.</title>
        <authorList>
            <person name="Olsen J.V."/>
            <person name="Blagoev B."/>
            <person name="Gnad F."/>
            <person name="Macek B."/>
            <person name="Kumar C."/>
            <person name="Mortensen P."/>
            <person name="Mann M."/>
        </authorList>
    </citation>
    <scope>PHOSPHORYLATION [LARGE SCALE ANALYSIS] AT SER-356; THR-358 AND SER-687</scope>
    <scope>IDENTIFICATION BY MASS SPECTROMETRY [LARGE SCALE ANALYSIS]</scope>
    <source>
        <tissue>Cervix carcinoma</tissue>
    </source>
</reference>
<reference key="8">
    <citation type="journal article" date="2007" name="Science">
        <title>ATM and ATR substrate analysis reveals extensive protein networks responsive to DNA damage.</title>
        <authorList>
            <person name="Matsuoka S."/>
            <person name="Ballif B.A."/>
            <person name="Smogorzewska A."/>
            <person name="McDonald E.R. III"/>
            <person name="Hurov K.E."/>
            <person name="Luo J."/>
            <person name="Bakalarski C.E."/>
            <person name="Zhao Z."/>
            <person name="Solimini N."/>
            <person name="Lerenthal Y."/>
            <person name="Shiloh Y."/>
            <person name="Gygi S.P."/>
            <person name="Elledge S.J."/>
        </authorList>
    </citation>
    <scope>PHOSPHORYLATION [LARGE SCALE ANALYSIS] AT SER-315 AND SER-696</scope>
    <scope>VARIANT [LARGE SCALE ANALYSIS] ASP-699</scope>
    <scope>IDENTIFICATION BY MASS SPECTROMETRY [LARGE SCALE ANALYSIS]</scope>
    <source>
        <tissue>Embryonic kidney</tissue>
    </source>
</reference>
<reference key="9">
    <citation type="journal article" date="2008" name="Proc. Natl. Acad. Sci. U.S.A.">
        <title>A quantitative atlas of mitotic phosphorylation.</title>
        <authorList>
            <person name="Dephoure N."/>
            <person name="Zhou C."/>
            <person name="Villen J."/>
            <person name="Beausoleil S.A."/>
            <person name="Bakalarski C.E."/>
            <person name="Elledge S.J."/>
            <person name="Gygi S.P."/>
        </authorList>
    </citation>
    <scope>PHOSPHORYLATION [LARGE SCALE ANALYSIS] AT SER-254; SER-256; SER-257; SER-259; SER-397 AND SER-687</scope>
    <scope>IDENTIFICATION BY MASS SPECTROMETRY [LARGE SCALE ANALYSIS]</scope>
    <source>
        <tissue>Cervix carcinoma</tissue>
    </source>
</reference>
<reference key="10">
    <citation type="journal article" date="2009" name="Sci. Signal.">
        <title>Quantitative phosphoproteomic analysis of T cell receptor signaling reveals system-wide modulation of protein-protein interactions.</title>
        <authorList>
            <person name="Mayya V."/>
            <person name="Lundgren D.H."/>
            <person name="Hwang S.-I."/>
            <person name="Rezaul K."/>
            <person name="Wu L."/>
            <person name="Eng J.K."/>
            <person name="Rodionov V."/>
            <person name="Han D.K."/>
        </authorList>
    </citation>
    <scope>IDENTIFICATION BY MASS SPECTROMETRY [LARGE SCALE ANALYSIS]</scope>
    <source>
        <tissue>Leukemic T-cell</tissue>
    </source>
</reference>
<reference key="11">
    <citation type="journal article" date="2010" name="Sci. Signal.">
        <title>Quantitative phosphoproteomics reveals widespread full phosphorylation site occupancy during mitosis.</title>
        <authorList>
            <person name="Olsen J.V."/>
            <person name="Vermeulen M."/>
            <person name="Santamaria A."/>
            <person name="Kumar C."/>
            <person name="Miller M.L."/>
            <person name="Jensen L.J."/>
            <person name="Gnad F."/>
            <person name="Cox J."/>
            <person name="Jensen T.S."/>
            <person name="Nigg E.A."/>
            <person name="Brunak S."/>
            <person name="Mann M."/>
        </authorList>
    </citation>
    <scope>PHOSPHORYLATION [LARGE SCALE ANALYSIS] AT SER-413; SER-415; SER-687; SER-690; SER-696; THR-748 AND SER-753</scope>
    <scope>VARIANT [LARGE SCALE ANALYSIS] ASP-699</scope>
    <scope>IDENTIFICATION BY MASS SPECTROMETRY [LARGE SCALE ANALYSIS]</scope>
    <source>
        <tissue>Cervix carcinoma</tissue>
    </source>
</reference>
<reference key="12">
    <citation type="journal article" date="2011" name="Sci. Signal.">
        <title>System-wide temporal characterization of the proteome and phosphoproteome of human embryonic stem cell differentiation.</title>
        <authorList>
            <person name="Rigbolt K.T."/>
            <person name="Prokhorova T.A."/>
            <person name="Akimov V."/>
            <person name="Henningsen J."/>
            <person name="Johansen P.T."/>
            <person name="Kratchmarova I."/>
            <person name="Kassem M."/>
            <person name="Mann M."/>
            <person name="Olsen J.V."/>
            <person name="Blagoev B."/>
        </authorList>
    </citation>
    <scope>PHOSPHORYLATION [LARGE SCALE ANALYSIS] AT SER-356; THR-358; SER-687; SER-690 AND THR-748</scope>
    <scope>IDENTIFICATION BY MASS SPECTROMETRY [LARGE SCALE ANALYSIS]</scope>
</reference>
<reference key="13">
    <citation type="journal article" date="2013" name="J. Proteome Res.">
        <title>Toward a comprehensive characterization of a human cancer cell phosphoproteome.</title>
        <authorList>
            <person name="Zhou H."/>
            <person name="Di Palma S."/>
            <person name="Preisinger C."/>
            <person name="Peng M."/>
            <person name="Polat A.N."/>
            <person name="Heck A.J."/>
            <person name="Mohammed S."/>
        </authorList>
    </citation>
    <scope>PHOSPHORYLATION [LARGE SCALE ANALYSIS] AT SER-356; THR-358; SER-386; SER-397; SER-687; SER-745 AND THR-748</scope>
    <scope>IDENTIFICATION BY MASS SPECTROMETRY [LARGE SCALE ANALYSIS]</scope>
    <source>
        <tissue>Cervix carcinoma</tissue>
        <tissue>Erythroleukemia</tissue>
    </source>
</reference>
<reference key="14">
    <citation type="journal article" date="2014" name="J. Proteomics">
        <title>An enzyme assisted RP-RPLC approach for in-depth analysis of human liver phosphoproteome.</title>
        <authorList>
            <person name="Bian Y."/>
            <person name="Song C."/>
            <person name="Cheng K."/>
            <person name="Dong M."/>
            <person name="Wang F."/>
            <person name="Huang J."/>
            <person name="Sun D."/>
            <person name="Wang L."/>
            <person name="Ye M."/>
            <person name="Zou H."/>
        </authorList>
    </citation>
    <scope>PHOSPHORYLATION [LARGE SCALE ANALYSIS] AT SER-290; SER-744; SER-745 AND THR-748</scope>
    <scope>IDENTIFICATION BY MASS SPECTROMETRY [LARGE SCALE ANALYSIS]</scope>
    <source>
        <tissue>Liver</tissue>
    </source>
</reference>
<reference key="15">
    <citation type="journal article" date="2017" name="Nat. Struct. Mol. Biol.">
        <title>Site-specific mapping of the human SUMO proteome reveals co-modification with phosphorylation.</title>
        <authorList>
            <person name="Hendriks I.A."/>
            <person name="Lyon D."/>
            <person name="Young C."/>
            <person name="Jensen L.J."/>
            <person name="Vertegaal A.C."/>
            <person name="Nielsen M.L."/>
        </authorList>
    </citation>
    <scope>SUMOYLATION [LARGE SCALE ANALYSIS] AT LYS-392 AND LYS-693</scope>
    <scope>IDENTIFICATION BY MASS SPECTROMETRY [LARGE SCALE ANALYSIS]</scope>
</reference>
<reference evidence="9" key="16">
    <citation type="journal article" date="2010" name="PLoS Biol.">
        <title>Structural and biochemical characterization of the human cyclophilin family of peptidyl-prolyl isomerases.</title>
        <authorList>
            <person name="Davis T.L."/>
            <person name="Walker J.R."/>
            <person name="Campagna-Slater V."/>
            <person name="Finerty P.J."/>
            <person name="Paramanathan R."/>
            <person name="Bernstein G."/>
            <person name="MacKenzie F."/>
            <person name="Tempel W."/>
            <person name="Ouyang H."/>
            <person name="Lee W.H."/>
            <person name="Eisenmesser E.Z."/>
            <person name="Dhe-Paganon S."/>
        </authorList>
    </citation>
    <scope>X-RAY CRYSTALLOGRAPHY (1.80 ANGSTROMS) OF 1-179</scope>
    <scope>FUNCTION</scope>
    <scope>CATALYTIC ACTIVITY</scope>
    <scope>ACTIVITY REGULATION</scope>
</reference>
<organism>
    <name type="scientific">Homo sapiens</name>
    <name type="common">Human</name>
    <dbReference type="NCBI Taxonomy" id="9606"/>
    <lineage>
        <taxon>Eukaryota</taxon>
        <taxon>Metazoa</taxon>
        <taxon>Chordata</taxon>
        <taxon>Craniata</taxon>
        <taxon>Vertebrata</taxon>
        <taxon>Euteleostomi</taxon>
        <taxon>Mammalia</taxon>
        <taxon>Eutheria</taxon>
        <taxon>Euarchontoglires</taxon>
        <taxon>Primates</taxon>
        <taxon>Haplorrhini</taxon>
        <taxon>Catarrhini</taxon>
        <taxon>Hominidae</taxon>
        <taxon>Homo</taxon>
    </lineage>
</organism>
<gene>
    <name type="primary">PPIG</name>
</gene>
<accession>Q13427</accession>
<accession>D3DPC5</accession>
<accession>D3DPC6</accession>
<accession>O00706</accession>
<accession>Q53R40</accession>
<accession>Q53SN4</accession>
<accession>Q96DG9</accession>
<name>PPIG_HUMAN</name>
<protein>
    <recommendedName>
        <fullName>Peptidyl-prolyl cis-trans isomerase G</fullName>
        <shortName>PPIase G</shortName>
        <shortName>Peptidyl-prolyl isomerase G</shortName>
        <ecNumber evidence="4">5.2.1.8</ecNumber>
    </recommendedName>
    <alternativeName>
        <fullName>CASP10</fullName>
    </alternativeName>
    <alternativeName>
        <fullName>Clk-associating RS-cyclophilin</fullName>
        <shortName>CARS-Cyp</shortName>
        <shortName>CARS-cyclophilin</shortName>
        <shortName>SR-cyclophilin</shortName>
        <shortName>SR-cyp</shortName>
        <shortName>SRcyp</shortName>
    </alternativeName>
    <alternativeName>
        <fullName>Cyclophilin G</fullName>
    </alternativeName>
    <alternativeName>
        <fullName>Rotamase G</fullName>
    </alternativeName>
</protein>
<dbReference type="EC" id="5.2.1.8" evidence="4"/>
<dbReference type="EMBL" id="U40763">
    <property type="protein sequence ID" value="AAB40347.1"/>
    <property type="molecule type" value="mRNA"/>
</dbReference>
<dbReference type="EMBL" id="X99717">
    <property type="protein sequence ID" value="CAA68053.1"/>
    <property type="molecule type" value="mRNA"/>
</dbReference>
<dbReference type="EMBL" id="AC093899">
    <property type="protein sequence ID" value="AAY24119.1"/>
    <property type="molecule type" value="Genomic_DNA"/>
</dbReference>
<dbReference type="EMBL" id="AC016772">
    <property type="protein sequence ID" value="AAY24233.1"/>
    <property type="molecule type" value="Genomic_DNA"/>
</dbReference>
<dbReference type="EMBL" id="CH471058">
    <property type="protein sequence ID" value="EAX11267.1"/>
    <property type="molecule type" value="Genomic_DNA"/>
</dbReference>
<dbReference type="EMBL" id="CH471058">
    <property type="protein sequence ID" value="EAX11268.1"/>
    <property type="molecule type" value="Genomic_DNA"/>
</dbReference>
<dbReference type="EMBL" id="CH471058">
    <property type="protein sequence ID" value="EAX11269.1"/>
    <property type="molecule type" value="Genomic_DNA"/>
</dbReference>
<dbReference type="EMBL" id="CH471058">
    <property type="protein sequence ID" value="EAX11270.1"/>
    <property type="molecule type" value="Genomic_DNA"/>
</dbReference>
<dbReference type="EMBL" id="BC001555">
    <property type="protein sequence ID" value="AAH01555.1"/>
    <property type="molecule type" value="mRNA"/>
</dbReference>
<dbReference type="CCDS" id="CCDS2235.1">
    <molecule id="Q13427-1"/>
</dbReference>
<dbReference type="PIR" id="JC5314">
    <property type="entry name" value="JC5314"/>
</dbReference>
<dbReference type="RefSeq" id="NP_004783.2">
    <molecule id="Q13427-1"/>
    <property type="nucleotide sequence ID" value="NM_004792.2"/>
</dbReference>
<dbReference type="RefSeq" id="XP_005247023.1">
    <molecule id="Q13427-1"/>
    <property type="nucleotide sequence ID" value="XM_005246966.3"/>
</dbReference>
<dbReference type="RefSeq" id="XP_005247024.1">
    <molecule id="Q13427-1"/>
    <property type="nucleotide sequence ID" value="XM_005246967.2"/>
</dbReference>
<dbReference type="PDB" id="2GW2">
    <property type="method" value="X-ray"/>
    <property type="resolution" value="1.80 A"/>
    <property type="chains" value="A=1-179"/>
</dbReference>
<dbReference type="PDB" id="2WFI">
    <property type="method" value="X-ray"/>
    <property type="resolution" value="0.75 A"/>
    <property type="chains" value="A=1-177"/>
</dbReference>
<dbReference type="PDB" id="2WFJ">
    <property type="method" value="X-ray"/>
    <property type="resolution" value="0.75 A"/>
    <property type="chains" value="A=1-177"/>
</dbReference>
<dbReference type="PDB" id="5YZG">
    <property type="method" value="EM"/>
    <property type="resolution" value="4.10 A"/>
    <property type="chains" value="3=1-754"/>
</dbReference>
<dbReference type="PDBsum" id="2GW2"/>
<dbReference type="PDBsum" id="2WFI"/>
<dbReference type="PDBsum" id="2WFJ"/>
<dbReference type="PDBsum" id="5YZG"/>
<dbReference type="EMDB" id="EMD-6864"/>
<dbReference type="SMR" id="Q13427"/>
<dbReference type="BioGRID" id="114761">
    <property type="interactions" value="160"/>
</dbReference>
<dbReference type="CORUM" id="Q13427"/>
<dbReference type="FunCoup" id="Q13427">
    <property type="interactions" value="4187"/>
</dbReference>
<dbReference type="IntAct" id="Q13427">
    <property type="interactions" value="90"/>
</dbReference>
<dbReference type="MINT" id="Q13427"/>
<dbReference type="STRING" id="9606.ENSP00000260970"/>
<dbReference type="BindingDB" id="Q13427"/>
<dbReference type="ChEMBL" id="CHEMBL3707467"/>
<dbReference type="DrugBank" id="DB00172">
    <property type="generic name" value="Proline"/>
</dbReference>
<dbReference type="GlyGen" id="Q13427">
    <property type="glycosylation" value="5 sites, 2 N-linked glycans (2 sites), 1 O-linked glycan (3 sites)"/>
</dbReference>
<dbReference type="iPTMnet" id="Q13427"/>
<dbReference type="PhosphoSitePlus" id="Q13427"/>
<dbReference type="BioMuta" id="PPIG"/>
<dbReference type="DMDM" id="229462749"/>
<dbReference type="jPOST" id="Q13427"/>
<dbReference type="MassIVE" id="Q13427"/>
<dbReference type="PaxDb" id="9606-ENSP00000260970"/>
<dbReference type="PeptideAtlas" id="Q13427"/>
<dbReference type="ProteomicsDB" id="59415">
    <molecule id="Q13427-1"/>
</dbReference>
<dbReference type="ProteomicsDB" id="59416">
    <molecule id="Q13427-2"/>
</dbReference>
<dbReference type="Pumba" id="Q13427"/>
<dbReference type="Antibodypedia" id="19292">
    <property type="antibodies" value="282 antibodies from 33 providers"/>
</dbReference>
<dbReference type="DNASU" id="9360"/>
<dbReference type="Ensembl" id="ENST00000260970.8">
    <molecule id="Q13427-1"/>
    <property type="protein sequence ID" value="ENSP00000260970.3"/>
    <property type="gene ID" value="ENSG00000138398.17"/>
</dbReference>
<dbReference type="Ensembl" id="ENST00000414307.6">
    <molecule id="Q13427-2"/>
    <property type="protein sequence ID" value="ENSP00000402222.2"/>
    <property type="gene ID" value="ENSG00000138398.17"/>
</dbReference>
<dbReference type="Ensembl" id="ENST00000433207.6">
    <molecule id="Q13427-1"/>
    <property type="protein sequence ID" value="ENSP00000408683.2"/>
    <property type="gene ID" value="ENSG00000138398.17"/>
</dbReference>
<dbReference type="Ensembl" id="ENST00000448752.7">
    <molecule id="Q13427-1"/>
    <property type="protein sequence ID" value="ENSP00000407083.2"/>
    <property type="gene ID" value="ENSG00000138398.17"/>
</dbReference>
<dbReference type="Ensembl" id="ENST00000462903.6">
    <molecule id="Q13427-2"/>
    <property type="protein sequence ID" value="ENSP00000435987.1"/>
    <property type="gene ID" value="ENSG00000138398.17"/>
</dbReference>
<dbReference type="Ensembl" id="ENST00000676756.1">
    <molecule id="Q13427-1"/>
    <property type="protein sequence ID" value="ENSP00000503525.1"/>
    <property type="gene ID" value="ENSG00000138398.17"/>
</dbReference>
<dbReference type="Ensembl" id="ENST00000678499.1">
    <molecule id="Q13427-1"/>
    <property type="protein sequence ID" value="ENSP00000503136.1"/>
    <property type="gene ID" value="ENSG00000138398.17"/>
</dbReference>
<dbReference type="Ensembl" id="ENST00000679107.1">
    <molecule id="Q13427-1"/>
    <property type="protein sequence ID" value="ENSP00000502997.1"/>
    <property type="gene ID" value="ENSG00000138398.17"/>
</dbReference>
<dbReference type="GeneID" id="9360"/>
<dbReference type="KEGG" id="hsa:9360"/>
<dbReference type="MANE-Select" id="ENST00000260970.8">
    <property type="protein sequence ID" value="ENSP00000260970.3"/>
    <property type="RefSeq nucleotide sequence ID" value="NM_004792.3"/>
    <property type="RefSeq protein sequence ID" value="NP_004783.2"/>
</dbReference>
<dbReference type="UCSC" id="uc002uez.4">
    <molecule id="Q13427-1"/>
    <property type="organism name" value="human"/>
</dbReference>
<dbReference type="AGR" id="HGNC:14650"/>
<dbReference type="CTD" id="9360"/>
<dbReference type="DisGeNET" id="9360"/>
<dbReference type="GeneCards" id="PPIG"/>
<dbReference type="HGNC" id="HGNC:14650">
    <property type="gene designation" value="PPIG"/>
</dbReference>
<dbReference type="HPA" id="ENSG00000138398">
    <property type="expression patterns" value="Low tissue specificity"/>
</dbReference>
<dbReference type="MIM" id="606093">
    <property type="type" value="gene"/>
</dbReference>
<dbReference type="neXtProt" id="NX_Q13427"/>
<dbReference type="OpenTargets" id="ENSG00000138398"/>
<dbReference type="PharmGKB" id="PA33585"/>
<dbReference type="VEuPathDB" id="HostDB:ENSG00000138398"/>
<dbReference type="eggNOG" id="KOG0546">
    <property type="taxonomic scope" value="Eukaryota"/>
</dbReference>
<dbReference type="GeneTree" id="ENSGT00940000157954"/>
<dbReference type="HOGENOM" id="CLU_012062_33_6_1"/>
<dbReference type="InParanoid" id="Q13427"/>
<dbReference type="OMA" id="NQNQFNR"/>
<dbReference type="OrthoDB" id="6630374at2759"/>
<dbReference type="PAN-GO" id="Q13427">
    <property type="GO annotations" value="6 GO annotations based on evolutionary models"/>
</dbReference>
<dbReference type="PhylomeDB" id="Q13427"/>
<dbReference type="TreeFam" id="TF318563"/>
<dbReference type="BRENDA" id="5.2.1.8">
    <property type="organism ID" value="2681"/>
</dbReference>
<dbReference type="PathwayCommons" id="Q13427"/>
<dbReference type="Reactome" id="R-HSA-72163">
    <property type="pathway name" value="mRNA Splicing - Major Pathway"/>
</dbReference>
<dbReference type="Reactome" id="R-HSA-9692916">
    <property type="pathway name" value="SARS-CoV-1 activates/modulates innate immune responses"/>
</dbReference>
<dbReference type="SignaLink" id="Q13427"/>
<dbReference type="BioGRID-ORCS" id="9360">
    <property type="hits" value="14 hits in 1163 CRISPR screens"/>
</dbReference>
<dbReference type="CD-CODE" id="804901D1">
    <property type="entry name" value="Nuclear speckle"/>
</dbReference>
<dbReference type="CD-CODE" id="DEE660B4">
    <property type="entry name" value="Stress granule"/>
</dbReference>
<dbReference type="ChiTaRS" id="PPIG">
    <property type="organism name" value="human"/>
</dbReference>
<dbReference type="EvolutionaryTrace" id="Q13427"/>
<dbReference type="GeneWiki" id="PPIG_(gene)"/>
<dbReference type="GenomeRNAi" id="9360"/>
<dbReference type="Pharos" id="Q13427">
    <property type="development level" value="Tchem"/>
</dbReference>
<dbReference type="PRO" id="PR:Q13427"/>
<dbReference type="Proteomes" id="UP000005640">
    <property type="component" value="Chromosome 2"/>
</dbReference>
<dbReference type="RNAct" id="Q13427">
    <property type="molecule type" value="protein"/>
</dbReference>
<dbReference type="Bgee" id="ENSG00000138398">
    <property type="expression patterns" value="Expressed in sural nerve and 220 other cell types or tissues"/>
</dbReference>
<dbReference type="ExpressionAtlas" id="Q13427">
    <property type="expression patterns" value="baseline and differential"/>
</dbReference>
<dbReference type="GO" id="GO:0005737">
    <property type="term" value="C:cytoplasm"/>
    <property type="evidence" value="ECO:0000318"/>
    <property type="project" value="GO_Central"/>
</dbReference>
<dbReference type="GO" id="GO:0005829">
    <property type="term" value="C:cytosol"/>
    <property type="evidence" value="ECO:0000314"/>
    <property type="project" value="HPA"/>
</dbReference>
<dbReference type="GO" id="GO:0016363">
    <property type="term" value="C:nuclear matrix"/>
    <property type="evidence" value="ECO:0007669"/>
    <property type="project" value="UniProtKB-SubCell"/>
</dbReference>
<dbReference type="GO" id="GO:0016607">
    <property type="term" value="C:nuclear speck"/>
    <property type="evidence" value="ECO:0000314"/>
    <property type="project" value="HPA"/>
</dbReference>
<dbReference type="GO" id="GO:0005654">
    <property type="term" value="C:nucleoplasm"/>
    <property type="evidence" value="ECO:0000304"/>
    <property type="project" value="Reactome"/>
</dbReference>
<dbReference type="GO" id="GO:0005634">
    <property type="term" value="C:nucleus"/>
    <property type="evidence" value="ECO:0000318"/>
    <property type="project" value="GO_Central"/>
</dbReference>
<dbReference type="GO" id="GO:0016018">
    <property type="term" value="F:cyclosporin A binding"/>
    <property type="evidence" value="ECO:0000318"/>
    <property type="project" value="GO_Central"/>
</dbReference>
<dbReference type="GO" id="GO:0003755">
    <property type="term" value="F:peptidyl-prolyl cis-trans isomerase activity"/>
    <property type="evidence" value="ECO:0000314"/>
    <property type="project" value="UniProtKB"/>
</dbReference>
<dbReference type="GO" id="GO:0003723">
    <property type="term" value="F:RNA binding"/>
    <property type="evidence" value="ECO:0007005"/>
    <property type="project" value="UniProtKB"/>
</dbReference>
<dbReference type="GO" id="GO:0006457">
    <property type="term" value="P:protein folding"/>
    <property type="evidence" value="ECO:0000318"/>
    <property type="project" value="GO_Central"/>
</dbReference>
<dbReference type="GO" id="GO:0008380">
    <property type="term" value="P:RNA splicing"/>
    <property type="evidence" value="ECO:0000304"/>
    <property type="project" value="ProtInc"/>
</dbReference>
<dbReference type="FunFam" id="2.40.100.10:FF:000005">
    <property type="entry name" value="Peptidyl-prolyl cis-trans isomerase G"/>
    <property type="match status" value="1"/>
</dbReference>
<dbReference type="Gene3D" id="2.40.100.10">
    <property type="entry name" value="Cyclophilin-like"/>
    <property type="match status" value="1"/>
</dbReference>
<dbReference type="InterPro" id="IPR029000">
    <property type="entry name" value="Cyclophilin-like_dom_sf"/>
</dbReference>
<dbReference type="InterPro" id="IPR020892">
    <property type="entry name" value="Cyclophilin-type_PPIase_CS"/>
</dbReference>
<dbReference type="InterPro" id="IPR002130">
    <property type="entry name" value="Cyclophilin-type_PPIase_dom"/>
</dbReference>
<dbReference type="PANTHER" id="PTHR11071">
    <property type="entry name" value="PEPTIDYL-PROLYL CIS-TRANS ISOMERASE"/>
    <property type="match status" value="1"/>
</dbReference>
<dbReference type="PANTHER" id="PTHR11071:SF292">
    <property type="entry name" value="PEPTIDYL-PROLYL CIS-TRANS ISOMERASE G"/>
    <property type="match status" value="1"/>
</dbReference>
<dbReference type="Pfam" id="PF00160">
    <property type="entry name" value="Pro_isomerase"/>
    <property type="match status" value="1"/>
</dbReference>
<dbReference type="PRINTS" id="PR00153">
    <property type="entry name" value="CSAPPISMRASE"/>
</dbReference>
<dbReference type="SUPFAM" id="SSF50891">
    <property type="entry name" value="Cyclophilin-like"/>
    <property type="match status" value="1"/>
</dbReference>
<dbReference type="PROSITE" id="PS00170">
    <property type="entry name" value="CSA_PPIASE_1"/>
    <property type="match status" value="1"/>
</dbReference>
<dbReference type="PROSITE" id="PS50072">
    <property type="entry name" value="CSA_PPIASE_2"/>
    <property type="match status" value="1"/>
</dbReference>
<proteinExistence type="evidence at protein level"/>
<sequence>MGIKVQRPRCFFDIAINNQPAGRVVFELFSDVCPKTCENFRCLCTGEKGTGKSTQKPLHYKSCLFHRVVKDFMVQGGDFSEGNGRGGESIYGGFFEDESFAVKHNKEFLLSMANRGKDTNGSQFFITTKPTPHLDGHHVVFGQVISGQEVVREIENQKTDAASKPFAEVRILSCGELIPKSKVKKEEKKRHKSSSSSSSSSSDSDSSSDSQSSSDSSDSESATEEKSKKRKKKHRKNSRKHKKEKKKRKKSKKSASSESEAENLEAQPQSTVRPEEIPPIPENRFLMRKSPPKADEKERKNRERERERECNPPNSQPASYQRRLLVTRSGRKIKGRGPRRYRTPSRSRSRDRFRRSETPPHWRQEMQRAQRMRVSSGERWIKGDKSELNEIKENQRSPVRVKERKITDHRNVSESPNRKNEKEKKVKDHKSNSKERDIRRNSEKDDKYKNKVKKRAKSKSRSKSKEKSKSKERDSKHNRNEEKRMRSRSKGRDHENVKEKEKQSDSKGKDQERSRSKEKSKQLESKSNEHDHSKSKEKDRRAQSRSRECDITKGKHSYNSRTRERSRSRDRSRRVRSRTHDRDRSRSKEYHRYREQEYRRRGRSRSRERRTPPGRSRSKDRRRRRRDSRSSEREESQSRNKDKYRNQESKSSHRKENSESEKRMYSKSRDHNSSNNSREKKADRDQSPFSKIKQSSQDNELKSSMLKNKEDEKIRSSVEKENQKSKGQENDHVHEKNKKFDHESSPGTDEDKSG</sequence>
<feature type="chain" id="PRO_0000064150" description="Peptidyl-prolyl cis-trans isomerase G">
    <location>
        <begin position="1"/>
        <end position="754"/>
    </location>
</feature>
<feature type="domain" description="PPIase cyclophilin-type" evidence="1">
    <location>
        <begin position="11"/>
        <end position="176"/>
    </location>
</feature>
<feature type="region of interest" description="Disordered" evidence="2">
    <location>
        <begin position="182"/>
        <end position="754"/>
    </location>
</feature>
<feature type="compositionally biased region" description="Basic residues" evidence="2">
    <location>
        <begin position="182"/>
        <end position="193"/>
    </location>
</feature>
<feature type="compositionally biased region" description="Low complexity" evidence="2">
    <location>
        <begin position="194"/>
        <end position="216"/>
    </location>
</feature>
<feature type="compositionally biased region" description="Basic residues" evidence="2">
    <location>
        <begin position="228"/>
        <end position="253"/>
    </location>
</feature>
<feature type="compositionally biased region" description="Basic and acidic residues" evidence="2">
    <location>
        <begin position="292"/>
        <end position="310"/>
    </location>
</feature>
<feature type="compositionally biased region" description="Basic residues" evidence="2">
    <location>
        <begin position="329"/>
        <end position="347"/>
    </location>
</feature>
<feature type="compositionally biased region" description="Basic and acidic residues" evidence="2">
    <location>
        <begin position="348"/>
        <end position="368"/>
    </location>
</feature>
<feature type="compositionally biased region" description="Basic and acidic residues" evidence="2">
    <location>
        <begin position="379"/>
        <end position="449"/>
    </location>
</feature>
<feature type="compositionally biased region" description="Basic residues" evidence="2">
    <location>
        <begin position="450"/>
        <end position="462"/>
    </location>
</feature>
<feature type="compositionally biased region" description="Basic and acidic residues" evidence="2">
    <location>
        <begin position="463"/>
        <end position="553"/>
    </location>
</feature>
<feature type="compositionally biased region" description="Basic and acidic residues" evidence="2">
    <location>
        <begin position="578"/>
        <end position="599"/>
    </location>
</feature>
<feature type="compositionally biased region" description="Basic residues" evidence="2">
    <location>
        <begin position="616"/>
        <end position="627"/>
    </location>
</feature>
<feature type="compositionally biased region" description="Basic and acidic residues" evidence="2">
    <location>
        <begin position="628"/>
        <end position="686"/>
    </location>
</feature>
<feature type="compositionally biased region" description="Polar residues" evidence="2">
    <location>
        <begin position="687"/>
        <end position="698"/>
    </location>
</feature>
<feature type="compositionally biased region" description="Basic and acidic residues" evidence="2">
    <location>
        <begin position="707"/>
        <end position="754"/>
    </location>
</feature>
<feature type="modified residue" description="Phosphoserine" evidence="12">
    <location>
        <position position="254"/>
    </location>
</feature>
<feature type="modified residue" description="Phosphoserine" evidence="12">
    <location>
        <position position="256"/>
    </location>
</feature>
<feature type="modified residue" description="Phosphoserine" evidence="12">
    <location>
        <position position="257"/>
    </location>
</feature>
<feature type="modified residue" description="Phosphoserine" evidence="12">
    <location>
        <position position="259"/>
    </location>
</feature>
<feature type="modified residue" description="Phosphoserine" evidence="16">
    <location>
        <position position="290"/>
    </location>
</feature>
<feature type="modified residue" description="Phosphoserine" evidence="11">
    <location>
        <position position="315"/>
    </location>
</feature>
<feature type="modified residue" description="Phosphoserine" evidence="10 14 15">
    <location>
        <position position="356"/>
    </location>
</feature>
<feature type="modified residue" description="Phosphothreonine" evidence="10 14 15">
    <location>
        <position position="358"/>
    </location>
</feature>
<feature type="modified residue" description="Phosphoserine" evidence="15">
    <location>
        <position position="386"/>
    </location>
</feature>
<feature type="modified residue" description="Phosphoserine" evidence="12 15">
    <location>
        <position position="397"/>
    </location>
</feature>
<feature type="modified residue" description="Phosphoserine" evidence="13">
    <location>
        <position position="413"/>
    </location>
</feature>
<feature type="modified residue" description="Phosphoserine" evidence="13">
    <location>
        <position position="415"/>
    </location>
</feature>
<feature type="modified residue" description="Phosphoserine" evidence="10 12 13 14 15">
    <location>
        <position position="687"/>
    </location>
</feature>
<feature type="modified residue" description="Phosphoserine" evidence="13 14">
    <location>
        <position position="690"/>
    </location>
</feature>
<feature type="modified residue" description="Phosphoserine" evidence="11 13">
    <location>
        <position position="696"/>
    </location>
</feature>
<feature type="modified residue" description="Phosphoserine" evidence="16">
    <location>
        <position position="744"/>
    </location>
</feature>
<feature type="modified residue" description="Phosphoserine" evidence="15 16">
    <location>
        <position position="745"/>
    </location>
</feature>
<feature type="modified residue" description="Phosphothreonine" evidence="13 14 15 16">
    <location>
        <position position="748"/>
    </location>
</feature>
<feature type="modified residue" description="Phosphoserine" evidence="13">
    <location>
        <position position="753"/>
    </location>
</feature>
<feature type="cross-link" description="Glycyl lysine isopeptide (Lys-Gly) (interchain with G-Cter in SUMO2)" evidence="17">
    <location>
        <position position="392"/>
    </location>
</feature>
<feature type="cross-link" description="Glycyl lysine isopeptide (Lys-Gly) (interchain with G-Cter in SUMO2)" evidence="17">
    <location>
        <position position="693"/>
    </location>
</feature>
<feature type="splice variant" id="VSP_009662" description="In isoform 2." evidence="7">
    <original>RYRTPSRSRSRDRFRRSE</original>
    <variation>VGDSFPRDLHNIAFVFLK</variation>
    <location>
        <begin position="340"/>
        <end position="357"/>
    </location>
</feature>
<feature type="splice variant" id="VSP_009663" description="In isoform 2." evidence="7">
    <location>
        <begin position="358"/>
        <end position="754"/>
    </location>
</feature>
<feature type="sequence variant" id="VAR_055084" description="In dbSNP:rs1050354.">
    <original>D</original>
    <variation>E</variation>
    <location>
        <position position="445"/>
    </location>
</feature>
<feature type="sequence variant" id="VAR_055085" description="In dbSNP:rs8207." evidence="5 6 11 13">
    <original>N</original>
    <variation>D</variation>
    <location>
        <position position="699"/>
    </location>
</feature>
<feature type="strand" evidence="18">
    <location>
        <begin position="9"/>
        <end position="16"/>
    </location>
</feature>
<feature type="strand" evidence="18">
    <location>
        <begin position="19"/>
        <end position="28"/>
    </location>
</feature>
<feature type="turn" evidence="18">
    <location>
        <begin position="30"/>
        <end position="32"/>
    </location>
</feature>
<feature type="helix" evidence="18">
    <location>
        <begin position="34"/>
        <end position="45"/>
    </location>
</feature>
<feature type="turn" evidence="19">
    <location>
        <begin position="46"/>
        <end position="48"/>
    </location>
</feature>
<feature type="turn" evidence="18">
    <location>
        <begin position="52"/>
        <end position="54"/>
    </location>
</feature>
<feature type="strand" evidence="18">
    <location>
        <begin position="56"/>
        <end position="58"/>
    </location>
</feature>
<feature type="strand" evidence="18">
    <location>
        <begin position="64"/>
        <end position="69"/>
    </location>
</feature>
<feature type="turn" evidence="18">
    <location>
        <begin position="70"/>
        <end position="72"/>
    </location>
</feature>
<feature type="strand" evidence="18">
    <location>
        <begin position="73"/>
        <end position="76"/>
    </location>
</feature>
<feature type="turn" evidence="18">
    <location>
        <begin position="79"/>
        <end position="81"/>
    </location>
</feature>
<feature type="strand" evidence="18">
    <location>
        <begin position="82"/>
        <end position="85"/>
    </location>
</feature>
<feature type="strand" evidence="18">
    <location>
        <begin position="109"/>
        <end position="112"/>
    </location>
</feature>
<feature type="strand" evidence="19">
    <location>
        <begin position="114"/>
        <end position="116"/>
    </location>
</feature>
<feature type="strand" evidence="18">
    <location>
        <begin position="124"/>
        <end position="129"/>
    </location>
</feature>
<feature type="helix" evidence="18">
    <location>
        <begin position="132"/>
        <end position="134"/>
    </location>
</feature>
<feature type="turn" evidence="18">
    <location>
        <begin position="135"/>
        <end position="137"/>
    </location>
</feature>
<feature type="strand" evidence="18">
    <location>
        <begin position="140"/>
        <end position="146"/>
    </location>
</feature>
<feature type="helix" evidence="18">
    <location>
        <begin position="148"/>
        <end position="155"/>
    </location>
</feature>
<feature type="strand" evidence="18">
    <location>
        <begin position="165"/>
        <end position="167"/>
    </location>
</feature>
<feature type="strand" evidence="18">
    <location>
        <begin position="169"/>
        <end position="176"/>
    </location>
</feature>
<evidence type="ECO:0000255" key="1">
    <source>
        <dbReference type="PROSITE-ProRule" id="PRU00156"/>
    </source>
</evidence>
<evidence type="ECO:0000256" key="2">
    <source>
        <dbReference type="SAM" id="MobiDB-lite"/>
    </source>
</evidence>
<evidence type="ECO:0000269" key="3">
    <source>
    </source>
</evidence>
<evidence type="ECO:0000269" key="4">
    <source>
    </source>
</evidence>
<evidence type="ECO:0000269" key="5">
    <source>
    </source>
</evidence>
<evidence type="ECO:0000269" key="6">
    <source>
    </source>
</evidence>
<evidence type="ECO:0000303" key="7">
    <source>
    </source>
</evidence>
<evidence type="ECO:0000305" key="8">
    <source>
    </source>
</evidence>
<evidence type="ECO:0007744" key="9">
    <source>
        <dbReference type="PDB" id="2GW2"/>
    </source>
</evidence>
<evidence type="ECO:0007744" key="10">
    <source>
    </source>
</evidence>
<evidence type="ECO:0007744" key="11">
    <source>
    </source>
</evidence>
<evidence type="ECO:0007744" key="12">
    <source>
    </source>
</evidence>
<evidence type="ECO:0007744" key="13">
    <source>
    </source>
</evidence>
<evidence type="ECO:0007744" key="14">
    <source>
    </source>
</evidence>
<evidence type="ECO:0007744" key="15">
    <source>
    </source>
</evidence>
<evidence type="ECO:0007744" key="16">
    <source>
    </source>
</evidence>
<evidence type="ECO:0007744" key="17">
    <source>
    </source>
</evidence>
<evidence type="ECO:0007829" key="18">
    <source>
        <dbReference type="PDB" id="2WFI"/>
    </source>
</evidence>
<evidence type="ECO:0007829" key="19">
    <source>
        <dbReference type="PDB" id="2WFJ"/>
    </source>
</evidence>